<comment type="function">
    <text evidence="1">This protein is located at the 30S-50S ribosomal subunit interface and may play a role in the structure and function of the aminoacyl-tRNA binding site.</text>
</comment>
<comment type="similarity">
    <text evidence="1">Belongs to the bacterial ribosomal protein bL19 family.</text>
</comment>
<accession>A4TE75</accession>
<reference key="1">
    <citation type="submission" date="2007-04" db="EMBL/GenBank/DDBJ databases">
        <title>Complete sequence of chromosome of Mycobacterium gilvum PYR-GCK.</title>
        <authorList>
            <consortium name="US DOE Joint Genome Institute"/>
            <person name="Copeland A."/>
            <person name="Lucas S."/>
            <person name="Lapidus A."/>
            <person name="Barry K."/>
            <person name="Detter J.C."/>
            <person name="Glavina del Rio T."/>
            <person name="Hammon N."/>
            <person name="Israni S."/>
            <person name="Dalin E."/>
            <person name="Tice H."/>
            <person name="Pitluck S."/>
            <person name="Chain P."/>
            <person name="Malfatti S."/>
            <person name="Shin M."/>
            <person name="Vergez L."/>
            <person name="Schmutz J."/>
            <person name="Larimer F."/>
            <person name="Land M."/>
            <person name="Hauser L."/>
            <person name="Kyrpides N."/>
            <person name="Mikhailova N."/>
            <person name="Miller C."/>
            <person name="Richardson P."/>
        </authorList>
    </citation>
    <scope>NUCLEOTIDE SEQUENCE [LARGE SCALE GENOMIC DNA]</scope>
    <source>
        <strain>PYR-GCK</strain>
    </source>
</reference>
<keyword id="KW-0687">Ribonucleoprotein</keyword>
<keyword id="KW-0689">Ribosomal protein</keyword>
<sequence>MNTLDFVDQSSLRDDVPAFGPGDTVNVHVKVIEGSKERIQVFKGVVIRRQGGGIRETFTVRKESYGVGVERTFPVHSPNIDHIDIVTRGDVRRAKLYYLRDLRGKKAKIKEKR</sequence>
<evidence type="ECO:0000255" key="1">
    <source>
        <dbReference type="HAMAP-Rule" id="MF_00402"/>
    </source>
</evidence>
<evidence type="ECO:0000305" key="2"/>
<protein>
    <recommendedName>
        <fullName evidence="1">Large ribosomal subunit protein bL19</fullName>
    </recommendedName>
    <alternativeName>
        <fullName evidence="2">50S ribosomal protein L19</fullName>
    </alternativeName>
</protein>
<name>RL19_MYCGI</name>
<proteinExistence type="inferred from homology"/>
<organism>
    <name type="scientific">Mycolicibacterium gilvum (strain PYR-GCK)</name>
    <name type="common">Mycobacterium gilvum (strain PYR-GCK)</name>
    <dbReference type="NCBI Taxonomy" id="350054"/>
    <lineage>
        <taxon>Bacteria</taxon>
        <taxon>Bacillati</taxon>
        <taxon>Actinomycetota</taxon>
        <taxon>Actinomycetes</taxon>
        <taxon>Mycobacteriales</taxon>
        <taxon>Mycobacteriaceae</taxon>
        <taxon>Mycolicibacterium</taxon>
    </lineage>
</organism>
<gene>
    <name evidence="1" type="primary">rplS</name>
    <name type="ordered locus">Mflv_4170</name>
</gene>
<dbReference type="EMBL" id="CP000656">
    <property type="protein sequence ID" value="ABP46639.1"/>
    <property type="molecule type" value="Genomic_DNA"/>
</dbReference>
<dbReference type="SMR" id="A4TE75"/>
<dbReference type="STRING" id="350054.Mflv_4170"/>
<dbReference type="KEGG" id="mgi:Mflv_4170"/>
<dbReference type="eggNOG" id="COG0335">
    <property type="taxonomic scope" value="Bacteria"/>
</dbReference>
<dbReference type="HOGENOM" id="CLU_103507_2_1_11"/>
<dbReference type="OrthoDB" id="9803541at2"/>
<dbReference type="GO" id="GO:0022625">
    <property type="term" value="C:cytosolic large ribosomal subunit"/>
    <property type="evidence" value="ECO:0007669"/>
    <property type="project" value="TreeGrafter"/>
</dbReference>
<dbReference type="GO" id="GO:0003735">
    <property type="term" value="F:structural constituent of ribosome"/>
    <property type="evidence" value="ECO:0007669"/>
    <property type="project" value="InterPro"/>
</dbReference>
<dbReference type="GO" id="GO:0006412">
    <property type="term" value="P:translation"/>
    <property type="evidence" value="ECO:0007669"/>
    <property type="project" value="UniProtKB-UniRule"/>
</dbReference>
<dbReference type="FunFam" id="2.30.30.790:FF:000001">
    <property type="entry name" value="50S ribosomal protein L19"/>
    <property type="match status" value="1"/>
</dbReference>
<dbReference type="Gene3D" id="2.30.30.790">
    <property type="match status" value="1"/>
</dbReference>
<dbReference type="HAMAP" id="MF_00402">
    <property type="entry name" value="Ribosomal_bL19"/>
    <property type="match status" value="1"/>
</dbReference>
<dbReference type="InterPro" id="IPR001857">
    <property type="entry name" value="Ribosomal_bL19"/>
</dbReference>
<dbReference type="InterPro" id="IPR018257">
    <property type="entry name" value="Ribosomal_bL19_CS"/>
</dbReference>
<dbReference type="InterPro" id="IPR038657">
    <property type="entry name" value="Ribosomal_bL19_sf"/>
</dbReference>
<dbReference type="InterPro" id="IPR008991">
    <property type="entry name" value="Translation_prot_SH3-like_sf"/>
</dbReference>
<dbReference type="NCBIfam" id="TIGR01024">
    <property type="entry name" value="rplS_bact"/>
    <property type="match status" value="1"/>
</dbReference>
<dbReference type="PANTHER" id="PTHR15680:SF9">
    <property type="entry name" value="LARGE RIBOSOMAL SUBUNIT PROTEIN BL19M"/>
    <property type="match status" value="1"/>
</dbReference>
<dbReference type="PANTHER" id="PTHR15680">
    <property type="entry name" value="RIBOSOMAL PROTEIN L19"/>
    <property type="match status" value="1"/>
</dbReference>
<dbReference type="Pfam" id="PF01245">
    <property type="entry name" value="Ribosomal_L19"/>
    <property type="match status" value="1"/>
</dbReference>
<dbReference type="PIRSF" id="PIRSF002191">
    <property type="entry name" value="Ribosomal_L19"/>
    <property type="match status" value="1"/>
</dbReference>
<dbReference type="PRINTS" id="PR00061">
    <property type="entry name" value="RIBOSOMALL19"/>
</dbReference>
<dbReference type="SUPFAM" id="SSF50104">
    <property type="entry name" value="Translation proteins SH3-like domain"/>
    <property type="match status" value="1"/>
</dbReference>
<dbReference type="PROSITE" id="PS01015">
    <property type="entry name" value="RIBOSOMAL_L19"/>
    <property type="match status" value="1"/>
</dbReference>
<feature type="chain" id="PRO_1000080359" description="Large ribosomal subunit protein bL19">
    <location>
        <begin position="1"/>
        <end position="113"/>
    </location>
</feature>